<sequence>MGSWLSEVQWLFLVSLFVAALGTVGLYLAQWALAKARPPPRRRAEPDELRRRESDTLLSWILTRDSWGNQWQAAWVTALNYEAEKRGGPLRLSFQKDPRPQSLQLTVEKVSSVVKSTQEKVVICHVVGETLQFLVSAGPASATGSECQLYDVHLSPFHLKVEFHMEEKREDIQIRWSFTHVPETAIKIQPQAPGEKQALGVNMLSEALEDLFKHLVNAASPSVFLSTKPTQVKEAQSLQCPSSTAQEPCPPKPPRAHELKLQVKNIRVSLINHPGASGLSHVCVAQLNDPEQRFISTLVRNTTDLSWEEEFTFELNAKSKELVLQISQDGCSSEGLLGIATIHLDLFRKQPNGPQTFRLISGTEPDSLVLGSVTAEFSYVEPGELKSWPAPPPVSAAKIEKDRTVMPCGTVVTTVTAVKTKPRFDTGRATPLNSESPVRTPVTVKVIEKDISVQAISCHSAPVSKTFSSSDTELLVLNGSDPVAEVAIRQLSESSKLKLKSPRKKSTIIISGISKTSLSQDHNAALMLDYAASMDSTNQGDATSALCHPEATEASATTPPEENEPAQTLPALKPRENDLDSWELEKESPVASWSGPALQEPDGDELSESSLSTSELGAMKKHKGGLLRKGAKLFFRRRHQQKDPGLSQSHNDLVFLQQPEGRQKKGATLGRLLNRKLLTRHRGKHTMNGVPREPCI</sequence>
<comment type="subcellular location">
    <subcellularLocation>
        <location evidence="6">Membrane</location>
        <topology evidence="6">Single-pass membrane protein</topology>
    </subcellularLocation>
</comment>
<comment type="sequence caution" evidence="6">
    <conflict type="erroneous initiation">
        <sequence resource="EMBL-CDS" id="BAD90483"/>
    </conflict>
    <text>Extended N-terminus.</text>
</comment>
<protein>
    <recommendedName>
        <fullName>C2 domain-containing protein 2</fullName>
    </recommendedName>
</protein>
<feature type="chain" id="PRO_0000439647" description="C2 domain-containing protein 2">
    <location>
        <begin position="1"/>
        <end position="696"/>
    </location>
</feature>
<feature type="transmembrane region" description="Helical" evidence="2">
    <location>
        <begin position="8"/>
        <end position="28"/>
    </location>
</feature>
<feature type="domain" description="SMP-LBD" evidence="6">
    <location>
        <begin position="45"/>
        <end position="238"/>
    </location>
</feature>
<feature type="domain" description="C2" evidence="3">
    <location>
        <begin position="241"/>
        <end position="357"/>
    </location>
</feature>
<feature type="region of interest" description="Disordered" evidence="4">
    <location>
        <begin position="551"/>
        <end position="611"/>
    </location>
</feature>
<feature type="compositionally biased region" description="Basic and acidic residues" evidence="4">
    <location>
        <begin position="573"/>
        <end position="588"/>
    </location>
</feature>
<feature type="modified residue" description="Phosphoserine" evidence="9">
    <location>
        <position position="54"/>
    </location>
</feature>
<feature type="modified residue" description="Phosphoserine" evidence="1">
    <location>
        <position position="436"/>
    </location>
</feature>
<feature type="modified residue" description="Phosphothreonine" evidence="1">
    <location>
        <position position="440"/>
    </location>
</feature>
<feature type="modified residue" description="Phosphoserine" evidence="8 9">
    <location>
        <position position="581"/>
    </location>
</feature>
<feature type="sequence conflict" description="In Ref. 5; BAE41447." evidence="6" ref="5">
    <original>A</original>
    <variation>S</variation>
    <location>
        <position position="83"/>
    </location>
</feature>
<feature type="sequence conflict" description="In Ref. 5; BAE41447." evidence="6" ref="5">
    <original>K</original>
    <variation>N</variation>
    <location>
        <position position="196"/>
    </location>
</feature>
<feature type="sequence conflict" description="In Ref. 1; BAD90483, 3; AAH43688, 4; EDL03644 and 5; BAE41447." evidence="6" ref="1 3 4 5">
    <original>Q</original>
    <variation>K</variation>
    <location>
        <position position="197"/>
    </location>
</feature>
<organism>
    <name type="scientific">Mus musculus</name>
    <name type="common">Mouse</name>
    <dbReference type="NCBI Taxonomy" id="10090"/>
    <lineage>
        <taxon>Eukaryota</taxon>
        <taxon>Metazoa</taxon>
        <taxon>Chordata</taxon>
        <taxon>Craniata</taxon>
        <taxon>Vertebrata</taxon>
        <taxon>Euteleostomi</taxon>
        <taxon>Mammalia</taxon>
        <taxon>Eutheria</taxon>
        <taxon>Euarchontoglires</taxon>
        <taxon>Glires</taxon>
        <taxon>Rodentia</taxon>
        <taxon>Myomorpha</taxon>
        <taxon>Muroidea</taxon>
        <taxon>Muridae</taxon>
        <taxon>Murinae</taxon>
        <taxon>Mus</taxon>
        <taxon>Mus</taxon>
    </lineage>
</organism>
<gene>
    <name evidence="7" type="primary">C2cd2</name>
    <name evidence="5" type="synonym">Kiaa4045</name>
</gene>
<name>C2CD2_MOUSE</name>
<accession>E9Q3C1</accession>
<accession>Q3TE01</accession>
<accession>Q3UP20</accession>
<accession>Q5DTR6</accession>
<accession>Q80XM8</accession>
<proteinExistence type="evidence at protein level"/>
<reference key="1">
    <citation type="submission" date="2005-02" db="EMBL/GenBank/DDBJ databases">
        <title>Prediction of the coding sequences of mouse homologues of KIAA gene. the complete nucleotide sequences of mouse KIAA-homologous cDNAs identified by screening of terminal sequences of cDNA clones randomly sampled from size-fractionated libraries.</title>
        <authorList>
            <person name="Okazaki N."/>
            <person name="Kikuno R.F."/>
            <person name="Ohara R."/>
            <person name="Inamoto S."/>
            <person name="Nagase T."/>
            <person name="Ohara O."/>
            <person name="Koga H."/>
        </authorList>
    </citation>
    <scope>NUCLEOTIDE SEQUENCE [LARGE SCALE MRNA]</scope>
    <source>
        <tissue>Brain</tissue>
    </source>
</reference>
<reference key="2">
    <citation type="journal article" date="2009" name="PLoS Biol.">
        <title>Lineage-specific biology revealed by a finished genome assembly of the mouse.</title>
        <authorList>
            <person name="Church D.M."/>
            <person name="Goodstadt L."/>
            <person name="Hillier L.W."/>
            <person name="Zody M.C."/>
            <person name="Goldstein S."/>
            <person name="She X."/>
            <person name="Bult C.J."/>
            <person name="Agarwala R."/>
            <person name="Cherry J.L."/>
            <person name="DiCuccio M."/>
            <person name="Hlavina W."/>
            <person name="Kapustin Y."/>
            <person name="Meric P."/>
            <person name="Maglott D."/>
            <person name="Birtle Z."/>
            <person name="Marques A.C."/>
            <person name="Graves T."/>
            <person name="Zhou S."/>
            <person name="Teague B."/>
            <person name="Potamousis K."/>
            <person name="Churas C."/>
            <person name="Place M."/>
            <person name="Herschleb J."/>
            <person name="Runnheim R."/>
            <person name="Forrest D."/>
            <person name="Amos-Landgraf J."/>
            <person name="Schwartz D.C."/>
            <person name="Cheng Z."/>
            <person name="Lindblad-Toh K."/>
            <person name="Eichler E.E."/>
            <person name="Ponting C.P."/>
        </authorList>
    </citation>
    <scope>NUCLEOTIDE SEQUENCE [LARGE SCALE GENOMIC DNA]</scope>
    <source>
        <strain>C57BL/6J</strain>
    </source>
</reference>
<reference key="3">
    <citation type="submission" date="2005-09" db="EMBL/GenBank/DDBJ databases">
        <authorList>
            <person name="Mural R.J."/>
            <person name="Adams M.D."/>
            <person name="Myers E.W."/>
            <person name="Smith H.O."/>
            <person name="Venter J.C."/>
        </authorList>
    </citation>
    <scope>NUCLEOTIDE SEQUENCE [LARGE SCALE GENOMIC DNA]</scope>
    <source>
        <strain>Mixed</strain>
    </source>
</reference>
<reference key="4">
    <citation type="journal article" date="2004" name="Genome Res.">
        <title>The status, quality, and expansion of the NIH full-length cDNA project: the Mammalian Gene Collection (MGC).</title>
        <authorList>
            <consortium name="The MGC Project Team"/>
        </authorList>
    </citation>
    <scope>NUCLEOTIDE SEQUENCE [LARGE SCALE MRNA]</scope>
    <source>
        <strain>FVB/N</strain>
        <tissue>Liver</tissue>
    </source>
</reference>
<reference key="5">
    <citation type="journal article" date="2005" name="Science">
        <title>The transcriptional landscape of the mammalian genome.</title>
        <authorList>
            <person name="Carninci P."/>
            <person name="Kasukawa T."/>
            <person name="Katayama S."/>
            <person name="Gough J."/>
            <person name="Frith M.C."/>
            <person name="Maeda N."/>
            <person name="Oyama R."/>
            <person name="Ravasi T."/>
            <person name="Lenhard B."/>
            <person name="Wells C."/>
            <person name="Kodzius R."/>
            <person name="Shimokawa K."/>
            <person name="Bajic V.B."/>
            <person name="Brenner S.E."/>
            <person name="Batalov S."/>
            <person name="Forrest A.R."/>
            <person name="Zavolan M."/>
            <person name="Davis M.J."/>
            <person name="Wilming L.G."/>
            <person name="Aidinis V."/>
            <person name="Allen J.E."/>
            <person name="Ambesi-Impiombato A."/>
            <person name="Apweiler R."/>
            <person name="Aturaliya R.N."/>
            <person name="Bailey T.L."/>
            <person name="Bansal M."/>
            <person name="Baxter L."/>
            <person name="Beisel K.W."/>
            <person name="Bersano T."/>
            <person name="Bono H."/>
            <person name="Chalk A.M."/>
            <person name="Chiu K.P."/>
            <person name="Choudhary V."/>
            <person name="Christoffels A."/>
            <person name="Clutterbuck D.R."/>
            <person name="Crowe M.L."/>
            <person name="Dalla E."/>
            <person name="Dalrymple B.P."/>
            <person name="de Bono B."/>
            <person name="Della Gatta G."/>
            <person name="di Bernardo D."/>
            <person name="Down T."/>
            <person name="Engstrom P."/>
            <person name="Fagiolini M."/>
            <person name="Faulkner G."/>
            <person name="Fletcher C.F."/>
            <person name="Fukushima T."/>
            <person name="Furuno M."/>
            <person name="Futaki S."/>
            <person name="Gariboldi M."/>
            <person name="Georgii-Hemming P."/>
            <person name="Gingeras T.R."/>
            <person name="Gojobori T."/>
            <person name="Green R.E."/>
            <person name="Gustincich S."/>
            <person name="Harbers M."/>
            <person name="Hayashi Y."/>
            <person name="Hensch T.K."/>
            <person name="Hirokawa N."/>
            <person name="Hill D."/>
            <person name="Huminiecki L."/>
            <person name="Iacono M."/>
            <person name="Ikeo K."/>
            <person name="Iwama A."/>
            <person name="Ishikawa T."/>
            <person name="Jakt M."/>
            <person name="Kanapin A."/>
            <person name="Katoh M."/>
            <person name="Kawasawa Y."/>
            <person name="Kelso J."/>
            <person name="Kitamura H."/>
            <person name="Kitano H."/>
            <person name="Kollias G."/>
            <person name="Krishnan S.P."/>
            <person name="Kruger A."/>
            <person name="Kummerfeld S.K."/>
            <person name="Kurochkin I.V."/>
            <person name="Lareau L.F."/>
            <person name="Lazarevic D."/>
            <person name="Lipovich L."/>
            <person name="Liu J."/>
            <person name="Liuni S."/>
            <person name="McWilliam S."/>
            <person name="Madan Babu M."/>
            <person name="Madera M."/>
            <person name="Marchionni L."/>
            <person name="Matsuda H."/>
            <person name="Matsuzawa S."/>
            <person name="Miki H."/>
            <person name="Mignone F."/>
            <person name="Miyake S."/>
            <person name="Morris K."/>
            <person name="Mottagui-Tabar S."/>
            <person name="Mulder N."/>
            <person name="Nakano N."/>
            <person name="Nakauchi H."/>
            <person name="Ng P."/>
            <person name="Nilsson R."/>
            <person name="Nishiguchi S."/>
            <person name="Nishikawa S."/>
            <person name="Nori F."/>
            <person name="Ohara O."/>
            <person name="Okazaki Y."/>
            <person name="Orlando V."/>
            <person name="Pang K.C."/>
            <person name="Pavan W.J."/>
            <person name="Pavesi G."/>
            <person name="Pesole G."/>
            <person name="Petrovsky N."/>
            <person name="Piazza S."/>
            <person name="Reed J."/>
            <person name="Reid J.F."/>
            <person name="Ring B.Z."/>
            <person name="Ringwald M."/>
            <person name="Rost B."/>
            <person name="Ruan Y."/>
            <person name="Salzberg S.L."/>
            <person name="Sandelin A."/>
            <person name="Schneider C."/>
            <person name="Schoenbach C."/>
            <person name="Sekiguchi K."/>
            <person name="Semple C.A."/>
            <person name="Seno S."/>
            <person name="Sessa L."/>
            <person name="Sheng Y."/>
            <person name="Shibata Y."/>
            <person name="Shimada H."/>
            <person name="Shimada K."/>
            <person name="Silva D."/>
            <person name="Sinclair B."/>
            <person name="Sperling S."/>
            <person name="Stupka E."/>
            <person name="Sugiura K."/>
            <person name="Sultana R."/>
            <person name="Takenaka Y."/>
            <person name="Taki K."/>
            <person name="Tammoja K."/>
            <person name="Tan S.L."/>
            <person name="Tang S."/>
            <person name="Taylor M.S."/>
            <person name="Tegner J."/>
            <person name="Teichmann S.A."/>
            <person name="Ueda H.R."/>
            <person name="van Nimwegen E."/>
            <person name="Verardo R."/>
            <person name="Wei C.L."/>
            <person name="Yagi K."/>
            <person name="Yamanishi H."/>
            <person name="Zabarovsky E."/>
            <person name="Zhu S."/>
            <person name="Zimmer A."/>
            <person name="Hide W."/>
            <person name="Bult C."/>
            <person name="Grimmond S.M."/>
            <person name="Teasdale R.D."/>
            <person name="Liu E.T."/>
            <person name="Brusic V."/>
            <person name="Quackenbush J."/>
            <person name="Wahlestedt C."/>
            <person name="Mattick J.S."/>
            <person name="Hume D.A."/>
            <person name="Kai C."/>
            <person name="Sasaki D."/>
            <person name="Tomaru Y."/>
            <person name="Fukuda S."/>
            <person name="Kanamori-Katayama M."/>
            <person name="Suzuki M."/>
            <person name="Aoki J."/>
            <person name="Arakawa T."/>
            <person name="Iida J."/>
            <person name="Imamura K."/>
            <person name="Itoh M."/>
            <person name="Kato T."/>
            <person name="Kawaji H."/>
            <person name="Kawagashira N."/>
            <person name="Kawashima T."/>
            <person name="Kojima M."/>
            <person name="Kondo S."/>
            <person name="Konno H."/>
            <person name="Nakano K."/>
            <person name="Ninomiya N."/>
            <person name="Nishio T."/>
            <person name="Okada M."/>
            <person name="Plessy C."/>
            <person name="Shibata K."/>
            <person name="Shiraki T."/>
            <person name="Suzuki S."/>
            <person name="Tagami M."/>
            <person name="Waki K."/>
            <person name="Watahiki A."/>
            <person name="Okamura-Oho Y."/>
            <person name="Suzuki H."/>
            <person name="Kawai J."/>
            <person name="Hayashizaki Y."/>
        </authorList>
    </citation>
    <scope>NUCLEOTIDE SEQUENCE [LARGE SCALE MRNA] OF 1-582</scope>
    <source>
        <strain>C57BL/6J</strain>
        <tissue>Spleen</tissue>
    </source>
</reference>
<reference key="6">
    <citation type="journal article" date="2007" name="Proc. Natl. Acad. Sci. U.S.A.">
        <title>Large-scale phosphorylation analysis of mouse liver.</title>
        <authorList>
            <person name="Villen J."/>
            <person name="Beausoleil S.A."/>
            <person name="Gerber S.A."/>
            <person name="Gygi S.P."/>
        </authorList>
    </citation>
    <scope>PHOSPHORYLATION [LARGE SCALE ANALYSIS] AT SER-581</scope>
    <scope>IDENTIFICATION BY MASS SPECTROMETRY [LARGE SCALE ANALYSIS]</scope>
    <source>
        <tissue>Liver</tissue>
    </source>
</reference>
<reference key="7">
    <citation type="journal article" date="2010" name="Cell">
        <title>A tissue-specific atlas of mouse protein phosphorylation and expression.</title>
        <authorList>
            <person name="Huttlin E.L."/>
            <person name="Jedrychowski M.P."/>
            <person name="Elias J.E."/>
            <person name="Goswami T."/>
            <person name="Rad R."/>
            <person name="Beausoleil S.A."/>
            <person name="Villen J."/>
            <person name="Haas W."/>
            <person name="Sowa M.E."/>
            <person name="Gygi S.P."/>
        </authorList>
    </citation>
    <scope>PHOSPHORYLATION [LARGE SCALE ANALYSIS] AT SER-54 AND SER-581</scope>
    <scope>IDENTIFICATION BY MASS SPECTROMETRY [LARGE SCALE ANALYSIS]</scope>
    <source>
        <tissue>Brain</tissue>
        <tissue>Kidney</tissue>
        <tissue>Liver</tissue>
        <tissue>Lung</tissue>
        <tissue>Pancreas</tissue>
        <tissue>Spleen</tissue>
    </source>
</reference>
<dbReference type="EMBL" id="AK220454">
    <property type="protein sequence ID" value="BAD90483.1"/>
    <property type="status" value="ALT_INIT"/>
    <property type="molecule type" value="mRNA"/>
</dbReference>
<dbReference type="EMBL" id="AC121560">
    <property type="status" value="NOT_ANNOTATED_CDS"/>
    <property type="molecule type" value="Genomic_DNA"/>
</dbReference>
<dbReference type="EMBL" id="AC226122">
    <property type="status" value="NOT_ANNOTATED_CDS"/>
    <property type="molecule type" value="Genomic_DNA"/>
</dbReference>
<dbReference type="EMBL" id="CH466602">
    <property type="protein sequence ID" value="EDL03644.1"/>
    <property type="molecule type" value="Genomic_DNA"/>
</dbReference>
<dbReference type="EMBL" id="BC043688">
    <property type="protein sequence ID" value="AAH43688.1"/>
    <property type="molecule type" value="mRNA"/>
</dbReference>
<dbReference type="EMBL" id="AK143875">
    <property type="protein sequence ID" value="BAE25577.1"/>
    <property type="molecule type" value="mRNA"/>
</dbReference>
<dbReference type="EMBL" id="AK169902">
    <property type="protein sequence ID" value="BAE41447.1"/>
    <property type="molecule type" value="mRNA"/>
</dbReference>
<dbReference type="CCDS" id="CCDS28361.1"/>
<dbReference type="RefSeq" id="NP_777272.2">
    <property type="nucleotide sequence ID" value="NM_174847.2"/>
</dbReference>
<dbReference type="FunCoup" id="E9Q3C1">
    <property type="interactions" value="414"/>
</dbReference>
<dbReference type="STRING" id="10090.ENSMUSP00000127368"/>
<dbReference type="iPTMnet" id="E9Q3C1"/>
<dbReference type="PhosphoSitePlus" id="E9Q3C1"/>
<dbReference type="jPOST" id="E9Q3C1"/>
<dbReference type="PaxDb" id="10090-ENSMUSP00000127368"/>
<dbReference type="PeptideAtlas" id="E9Q3C1"/>
<dbReference type="ProteomicsDB" id="265464"/>
<dbReference type="Pumba" id="E9Q3C1"/>
<dbReference type="Antibodypedia" id="23680">
    <property type="antibodies" value="58 antibodies from 10 providers"/>
</dbReference>
<dbReference type="Ensembl" id="ENSMUST00000170757.3">
    <property type="protein sequence ID" value="ENSMUSP00000127368.2"/>
    <property type="gene ID" value="ENSMUSG00000045975.9"/>
</dbReference>
<dbReference type="GeneID" id="207781"/>
<dbReference type="KEGG" id="mmu:207781"/>
<dbReference type="UCSC" id="uc008ads.2">
    <property type="organism name" value="mouse"/>
</dbReference>
<dbReference type="AGR" id="MGI:1891883"/>
<dbReference type="CTD" id="25966"/>
<dbReference type="MGI" id="MGI:1891883">
    <property type="gene designation" value="C2cd2"/>
</dbReference>
<dbReference type="VEuPathDB" id="HostDB:ENSMUSG00000045975"/>
<dbReference type="eggNOG" id="ENOG502QV5U">
    <property type="taxonomic scope" value="Eukaryota"/>
</dbReference>
<dbReference type="GeneTree" id="ENSGT00530000063764"/>
<dbReference type="HOGENOM" id="CLU_024872_0_0_1"/>
<dbReference type="InParanoid" id="E9Q3C1"/>
<dbReference type="OMA" id="QEKVVTC"/>
<dbReference type="OrthoDB" id="90714at9989"/>
<dbReference type="PhylomeDB" id="E9Q3C1"/>
<dbReference type="TreeFam" id="TF331604"/>
<dbReference type="BioGRID-ORCS" id="207781">
    <property type="hits" value="2 hits in 75 CRISPR screens"/>
</dbReference>
<dbReference type="ChiTaRS" id="C2cd2">
    <property type="organism name" value="mouse"/>
</dbReference>
<dbReference type="PRO" id="PR:E9Q3C1"/>
<dbReference type="Proteomes" id="UP000000589">
    <property type="component" value="Chromosome 16"/>
</dbReference>
<dbReference type="RNAct" id="E9Q3C1">
    <property type="molecule type" value="protein"/>
</dbReference>
<dbReference type="Bgee" id="ENSMUSG00000045975">
    <property type="expression patterns" value="Expressed in hindlimb stylopod muscle and 217 other cell types or tissues"/>
</dbReference>
<dbReference type="ExpressionAtlas" id="E9Q3C1">
    <property type="expression patterns" value="baseline and differential"/>
</dbReference>
<dbReference type="GO" id="GO:0016020">
    <property type="term" value="C:membrane"/>
    <property type="evidence" value="ECO:0007669"/>
    <property type="project" value="UniProtKB-SubCell"/>
</dbReference>
<dbReference type="CDD" id="cd21682">
    <property type="entry name" value="SMP_C2CD2"/>
    <property type="match status" value="1"/>
</dbReference>
<dbReference type="Gene3D" id="2.60.40.150">
    <property type="entry name" value="C2 domain"/>
    <property type="match status" value="1"/>
</dbReference>
<dbReference type="InterPro" id="IPR000008">
    <property type="entry name" value="C2_dom"/>
</dbReference>
<dbReference type="InterPro" id="IPR035892">
    <property type="entry name" value="C2_domain_sf"/>
</dbReference>
<dbReference type="InterPro" id="IPR039934">
    <property type="entry name" value="C2CD2/C2CD2L"/>
</dbReference>
<dbReference type="InterPro" id="IPR040885">
    <property type="entry name" value="SMP_C2CD2L"/>
</dbReference>
<dbReference type="PANTHER" id="PTHR21119">
    <property type="entry name" value="C2 DOMAIN-CONTAINING PROTEIN"/>
    <property type="match status" value="1"/>
</dbReference>
<dbReference type="PANTHER" id="PTHR21119:SF7">
    <property type="entry name" value="C2 DOMAIN-CONTAINING PROTEIN 2"/>
    <property type="match status" value="1"/>
</dbReference>
<dbReference type="Pfam" id="PF00168">
    <property type="entry name" value="C2"/>
    <property type="match status" value="1"/>
</dbReference>
<dbReference type="Pfam" id="PF18696">
    <property type="entry name" value="SMP_C2CD2L"/>
    <property type="match status" value="1"/>
</dbReference>
<dbReference type="SUPFAM" id="SSF49562">
    <property type="entry name" value="C2 domain (Calcium/lipid-binding domain, CaLB)"/>
    <property type="match status" value="1"/>
</dbReference>
<dbReference type="PROSITE" id="PS50004">
    <property type="entry name" value="C2"/>
    <property type="match status" value="1"/>
</dbReference>
<keyword id="KW-0472">Membrane</keyword>
<keyword id="KW-0597">Phosphoprotein</keyword>
<keyword id="KW-1185">Reference proteome</keyword>
<keyword id="KW-0812">Transmembrane</keyword>
<keyword id="KW-1133">Transmembrane helix</keyword>
<evidence type="ECO:0000250" key="1">
    <source>
        <dbReference type="UniProtKB" id="Q9Y426"/>
    </source>
</evidence>
<evidence type="ECO:0000255" key="2"/>
<evidence type="ECO:0000255" key="3">
    <source>
        <dbReference type="PROSITE-ProRule" id="PRU00041"/>
    </source>
</evidence>
<evidence type="ECO:0000256" key="4">
    <source>
        <dbReference type="SAM" id="MobiDB-lite"/>
    </source>
</evidence>
<evidence type="ECO:0000303" key="5">
    <source ref="1"/>
</evidence>
<evidence type="ECO:0000305" key="6"/>
<evidence type="ECO:0000312" key="7">
    <source>
        <dbReference type="MGI" id="MGI:1891883"/>
    </source>
</evidence>
<evidence type="ECO:0007744" key="8">
    <source>
    </source>
</evidence>
<evidence type="ECO:0007744" key="9">
    <source>
    </source>
</evidence>